<accession>A0QYZ8</accession>
<accession>I7FND1</accession>
<dbReference type="EMBL" id="CP000480">
    <property type="protein sequence ID" value="ABK71926.1"/>
    <property type="molecule type" value="Genomic_DNA"/>
</dbReference>
<dbReference type="EMBL" id="CP001663">
    <property type="protein sequence ID" value="AFP40213.1"/>
    <property type="molecule type" value="Genomic_DNA"/>
</dbReference>
<dbReference type="RefSeq" id="WP_003895291.1">
    <property type="nucleotide sequence ID" value="NZ_SIJM01000005.1"/>
</dbReference>
<dbReference type="RefSeq" id="YP_888136.1">
    <property type="nucleotide sequence ID" value="NC_008596.1"/>
</dbReference>
<dbReference type="SMR" id="A0QYZ8"/>
<dbReference type="STRING" id="246196.MSMEG_3845"/>
<dbReference type="PaxDb" id="246196-MSMEI_3755"/>
<dbReference type="KEGG" id="msb:LJ00_19100"/>
<dbReference type="KEGG" id="msg:MSMEI_3755"/>
<dbReference type="KEGG" id="msm:MSMEG_3845"/>
<dbReference type="PATRIC" id="fig|246196.19.peg.3783"/>
<dbReference type="eggNOG" id="COG1872">
    <property type="taxonomic scope" value="Bacteria"/>
</dbReference>
<dbReference type="OrthoDB" id="9801878at2"/>
<dbReference type="Proteomes" id="UP000000757">
    <property type="component" value="Chromosome"/>
</dbReference>
<dbReference type="Proteomes" id="UP000006158">
    <property type="component" value="Chromosome"/>
</dbReference>
<dbReference type="Gene3D" id="3.30.1200.10">
    <property type="entry name" value="YggU-like"/>
    <property type="match status" value="1"/>
</dbReference>
<dbReference type="HAMAP" id="MF_00634">
    <property type="entry name" value="UPF0235"/>
    <property type="match status" value="1"/>
</dbReference>
<dbReference type="InterPro" id="IPR003746">
    <property type="entry name" value="DUF167"/>
</dbReference>
<dbReference type="InterPro" id="IPR036591">
    <property type="entry name" value="YggU-like_sf"/>
</dbReference>
<dbReference type="NCBIfam" id="TIGR00251">
    <property type="entry name" value="DUF167 family protein"/>
    <property type="match status" value="1"/>
</dbReference>
<dbReference type="Pfam" id="PF02594">
    <property type="entry name" value="DUF167"/>
    <property type="match status" value="1"/>
</dbReference>
<dbReference type="SMART" id="SM01152">
    <property type="entry name" value="DUF167"/>
    <property type="match status" value="1"/>
</dbReference>
<dbReference type="SUPFAM" id="SSF69786">
    <property type="entry name" value="YggU-like"/>
    <property type="match status" value="1"/>
</dbReference>
<evidence type="ECO:0000255" key="1">
    <source>
        <dbReference type="HAMAP-Rule" id="MF_00634"/>
    </source>
</evidence>
<organism>
    <name type="scientific">Mycolicibacterium smegmatis (strain ATCC 700084 / mc(2)155)</name>
    <name type="common">Mycobacterium smegmatis</name>
    <dbReference type="NCBI Taxonomy" id="246196"/>
    <lineage>
        <taxon>Bacteria</taxon>
        <taxon>Bacillati</taxon>
        <taxon>Actinomycetota</taxon>
        <taxon>Actinomycetes</taxon>
        <taxon>Mycobacteriales</taxon>
        <taxon>Mycobacteriaceae</taxon>
        <taxon>Mycolicibacterium</taxon>
    </lineage>
</organism>
<gene>
    <name type="ordered locus">MSMEG_3845</name>
    <name type="ordered locus">MSMEI_3755</name>
</gene>
<comment type="similarity">
    <text evidence="1">Belongs to the UPF0235 family.</text>
</comment>
<reference key="1">
    <citation type="submission" date="2006-10" db="EMBL/GenBank/DDBJ databases">
        <authorList>
            <person name="Fleischmann R.D."/>
            <person name="Dodson R.J."/>
            <person name="Haft D.H."/>
            <person name="Merkel J.S."/>
            <person name="Nelson W.C."/>
            <person name="Fraser C.M."/>
        </authorList>
    </citation>
    <scope>NUCLEOTIDE SEQUENCE [LARGE SCALE GENOMIC DNA]</scope>
    <source>
        <strain>ATCC 700084 / mc(2)155</strain>
    </source>
</reference>
<reference key="2">
    <citation type="journal article" date="2007" name="Genome Biol.">
        <title>Interrupted coding sequences in Mycobacterium smegmatis: authentic mutations or sequencing errors?</title>
        <authorList>
            <person name="Deshayes C."/>
            <person name="Perrodou E."/>
            <person name="Gallien S."/>
            <person name="Euphrasie D."/>
            <person name="Schaeffer C."/>
            <person name="Van-Dorsselaer A."/>
            <person name="Poch O."/>
            <person name="Lecompte O."/>
            <person name="Reyrat J.-M."/>
        </authorList>
    </citation>
    <scope>NUCLEOTIDE SEQUENCE [LARGE SCALE GENOMIC DNA]</scope>
    <source>
        <strain>ATCC 700084 / mc(2)155</strain>
    </source>
</reference>
<reference key="3">
    <citation type="journal article" date="2009" name="Genome Res.">
        <title>Ortho-proteogenomics: multiple proteomes investigation through orthology and a new MS-based protocol.</title>
        <authorList>
            <person name="Gallien S."/>
            <person name="Perrodou E."/>
            <person name="Carapito C."/>
            <person name="Deshayes C."/>
            <person name="Reyrat J.-M."/>
            <person name="Van Dorsselaer A."/>
            <person name="Poch O."/>
            <person name="Schaeffer C."/>
            <person name="Lecompte O."/>
        </authorList>
    </citation>
    <scope>NUCLEOTIDE SEQUENCE [LARGE SCALE GENOMIC DNA]</scope>
    <source>
        <strain>ATCC 700084 / mc(2)155</strain>
    </source>
</reference>
<sequence length="75" mass="7928">MSETVVVRVKPGSRKGPLVETADDGTLTIYVQERAVDGKANAAVTKLLAAHLGVPPSRVELASGATARLKRFRIS</sequence>
<name>Y3845_MYCS2</name>
<keyword id="KW-1185">Reference proteome</keyword>
<protein>
    <recommendedName>
        <fullName evidence="1">UPF0235 protein MSMEG_3845</fullName>
    </recommendedName>
</protein>
<proteinExistence type="inferred from homology"/>
<feature type="chain" id="PRO_1000130697" description="UPF0235 protein MSMEG_3845">
    <location>
        <begin position="1"/>
        <end position="75"/>
    </location>
</feature>